<dbReference type="EC" id="3.5.4.4" evidence="1"/>
<dbReference type="EC" id="1.10.3.-" evidence="2"/>
<dbReference type="EC" id="2.4.2.1" evidence="1"/>
<dbReference type="EC" id="2.4.2.28" evidence="1"/>
<dbReference type="EMBL" id="AM269758">
    <property type="protein sequence ID" value="CAK32504.1"/>
    <property type="molecule type" value="Genomic_DNA"/>
</dbReference>
<dbReference type="SMR" id="Q1EIR0"/>
<dbReference type="SABIO-RK" id="Q1EIR0"/>
<dbReference type="GO" id="GO:0004000">
    <property type="term" value="F:adenosine deaminase activity"/>
    <property type="evidence" value="ECO:0007669"/>
    <property type="project" value="RHEA"/>
</dbReference>
<dbReference type="GO" id="GO:0005507">
    <property type="term" value="F:copper ion binding"/>
    <property type="evidence" value="ECO:0000314"/>
    <property type="project" value="UniProtKB"/>
</dbReference>
<dbReference type="GO" id="GO:0016682">
    <property type="term" value="F:oxidoreductase activity, acting on diphenols and related substances as donors, oxygen as acceptor"/>
    <property type="evidence" value="ECO:0000314"/>
    <property type="project" value="UniProtKB"/>
</dbReference>
<dbReference type="GO" id="GO:0042803">
    <property type="term" value="F:protein homodimerization activity"/>
    <property type="evidence" value="ECO:0000314"/>
    <property type="project" value="UniProtKB"/>
</dbReference>
<dbReference type="GO" id="GO:0017061">
    <property type="term" value="F:S-methyl-5-thioadenosine phosphorylase activity"/>
    <property type="evidence" value="ECO:0007669"/>
    <property type="project" value="UniProtKB-EC"/>
</dbReference>
<dbReference type="CDD" id="cd16833">
    <property type="entry name" value="YfiH"/>
    <property type="match status" value="1"/>
</dbReference>
<dbReference type="FunFam" id="3.60.140.10:FF:000011">
    <property type="entry name" value="Polyphenol oxidase"/>
    <property type="match status" value="1"/>
</dbReference>
<dbReference type="Gene3D" id="3.60.140.10">
    <property type="entry name" value="CNF1/YfiH-like putative cysteine hydrolases"/>
    <property type="match status" value="1"/>
</dbReference>
<dbReference type="InterPro" id="IPR003730">
    <property type="entry name" value="Cu_polyphenol_OxRdtase"/>
</dbReference>
<dbReference type="InterPro" id="IPR038371">
    <property type="entry name" value="Cu_polyphenol_OxRdtase_sf"/>
</dbReference>
<dbReference type="InterPro" id="IPR011324">
    <property type="entry name" value="Cytotoxic_necrot_fac-like_cat"/>
</dbReference>
<dbReference type="NCBIfam" id="TIGR00726">
    <property type="entry name" value="peptidoglycan editing factor PgeF"/>
    <property type="match status" value="1"/>
</dbReference>
<dbReference type="PANTHER" id="PTHR30616:SF2">
    <property type="entry name" value="PURINE NUCLEOSIDE PHOSPHORYLASE LACC1"/>
    <property type="match status" value="1"/>
</dbReference>
<dbReference type="PANTHER" id="PTHR30616">
    <property type="entry name" value="UNCHARACTERIZED PROTEIN YFIH"/>
    <property type="match status" value="1"/>
</dbReference>
<dbReference type="Pfam" id="PF02578">
    <property type="entry name" value="Cu-oxidase_4"/>
    <property type="match status" value="1"/>
</dbReference>
<dbReference type="SUPFAM" id="SSF64438">
    <property type="entry name" value="CNF1/YfiH-like putative cysteine hydrolases"/>
    <property type="match status" value="1"/>
</dbReference>
<reference key="1">
    <citation type="journal article" date="2006" name="J. Biol. Chem.">
        <title>Novel polyphenol oxidase mined from a metagenome expression library of bovine rumen: biochemical properties, structural analysis, and phylogenetic relationships.</title>
        <authorList>
            <person name="Beloqui A."/>
            <person name="Pita M."/>
            <person name="Polaina J."/>
            <person name="Martinez-Arias A."/>
            <person name="Golyshina O.V."/>
            <person name="Zumarraga M."/>
            <person name="Yakimov M.M."/>
            <person name="Garcia-Arellano H."/>
            <person name="Alcalde M."/>
            <person name="Fernandez V.M."/>
            <person name="Elborough K."/>
            <person name="Andreu J.M."/>
            <person name="Ballesteros A."/>
            <person name="Plou F.J."/>
            <person name="Timmis K.N."/>
            <person name="Ferrer M."/>
            <person name="Golyshin P.N."/>
        </authorList>
    </citation>
    <scope>NUCLEOTIDE SEQUENCE [GENOMIC DNA]</scope>
    <scope>FUNCTION</scope>
    <scope>CATALYTIC ACTIVITY</scope>
    <scope>SUBSTRATE SPECIFICITY</scope>
    <scope>BIOPHYSICOCHEMICAL PROPERTIES</scope>
    <scope>COFACTOR</scope>
    <scope>SUBUNIT</scope>
    <scope>3D-STRUCTURE MODELING</scope>
    <scope>MUTAGENESIS OF ASN-36; TYR-40; MET-68; HIS-73; CYS-75; ASN-114; CYS-118; HIS-135; CYS-172; CYS-175; HIS-190; HIS-207; HIS-233; CYS-234; CYS-237 AND HIS-239</scope>
</reference>
<protein>
    <recommendedName>
        <fullName>Adenosine deaminase RL5</fullName>
        <ecNumber evidence="1">3.5.4.4</ecNumber>
    </recommendedName>
    <alternativeName>
        <fullName evidence="3">Laccase RL5</fullName>
    </alternativeName>
    <alternativeName>
        <fullName evidence="3">Multicopper oxidase RL5</fullName>
    </alternativeName>
    <alternativeName>
        <fullName evidence="3">Polyphenol oxidase</fullName>
        <ecNumber evidence="2">1.10.3.-</ecNumber>
    </alternativeName>
    <alternativeName>
        <fullName>Purine nucleoside phosphorylase RL5</fullName>
        <ecNumber evidence="1">2.4.2.1</ecNumber>
    </alternativeName>
    <alternativeName>
        <fullName>S-methyl-5'-thioadenosine phosphorylase RL5</fullName>
        <ecNumber evidence="1">2.4.2.28</ecNumber>
    </alternativeName>
</protein>
<organism>
    <name type="scientific">Unknown prokaryotic organism</name>
    <dbReference type="NCBI Taxonomy" id="2725"/>
    <lineage>
        <taxon>Bacteria</taxon>
        <taxon>environmental samples</taxon>
    </lineage>
</organism>
<evidence type="ECO:0000250" key="1">
    <source>
        <dbReference type="UniProtKB" id="P84138"/>
    </source>
</evidence>
<evidence type="ECO:0000269" key="2">
    <source>
    </source>
</evidence>
<evidence type="ECO:0000303" key="3">
    <source>
    </source>
</evidence>
<evidence type="ECO:0000305" key="4"/>
<evidence type="ECO:0000305" key="5">
    <source>
    </source>
</evidence>
<evidence type="ECO:0000312" key="6">
    <source>
        <dbReference type="EMBL" id="CAK32504.1"/>
    </source>
</evidence>
<gene>
    <name evidence="3 6" type="primary">rl5</name>
</gene>
<comment type="function">
    <text evidence="1 2">Purine nucleoside enzyme that catalyzes the phosphorolysis of adenosine and inosine nucleosides, yielding D-ribose 1-phosphate and the respective free bases, adenine and hypoxanthine (By similarity). Also catalyzes the phosphorolysis of S-methyl-5'-thioadenosine into adenine and S-methyl-5-thio-alpha-D-ribose 1-phosphate (By similarity). Also has adenosine deaminase activity (By similarity). Also acts as a multicopper oxidase able to oxidize a wide variety of polyphenols and related compounds in vitro (PubMed:16740638). Displays substrate preference as follows: syringaldazine &gt; 2,6-dimethoxyphenol &gt; veratryl alcohol &gt; guaiacol &gt; tetramethylbenzidine &gt; 4-methoxybenzyl alcohol &gt; 2,2'-azino-bis(3-ethylbenzthiazoline-6-sulfonic acid) (ABTS) &gt;&gt; phenol red &gt; 1-hydroxybenzotriazole (PubMed:16740638). Cannot use 3,4-dimetoxybenzyl alcohol and violuric acid as substrates (PubMed:16740638). As this enzyme is derived from a rumen microbial community, it may have a role in the digestion of complex plant materials such as ryegrass lignin (PubMed:16740638).</text>
</comment>
<comment type="catalytic activity">
    <reaction evidence="1">
        <text>adenosine + phosphate = alpha-D-ribose 1-phosphate + adenine</text>
        <dbReference type="Rhea" id="RHEA:27642"/>
        <dbReference type="ChEBI" id="CHEBI:16335"/>
        <dbReference type="ChEBI" id="CHEBI:16708"/>
        <dbReference type="ChEBI" id="CHEBI:43474"/>
        <dbReference type="ChEBI" id="CHEBI:57720"/>
        <dbReference type="EC" id="2.4.2.1"/>
    </reaction>
    <physiologicalReaction direction="left-to-right" evidence="1">
        <dbReference type="Rhea" id="RHEA:27643"/>
    </physiologicalReaction>
</comment>
<comment type="catalytic activity">
    <reaction evidence="1">
        <text>S-methyl-5'-thioadenosine + phosphate = 5-(methylsulfanyl)-alpha-D-ribose 1-phosphate + adenine</text>
        <dbReference type="Rhea" id="RHEA:11852"/>
        <dbReference type="ChEBI" id="CHEBI:16708"/>
        <dbReference type="ChEBI" id="CHEBI:17509"/>
        <dbReference type="ChEBI" id="CHEBI:43474"/>
        <dbReference type="ChEBI" id="CHEBI:58533"/>
        <dbReference type="EC" id="2.4.2.28"/>
    </reaction>
    <physiologicalReaction direction="left-to-right" evidence="1">
        <dbReference type="Rhea" id="RHEA:11853"/>
    </physiologicalReaction>
</comment>
<comment type="catalytic activity">
    <reaction evidence="1">
        <text>inosine + phosphate = alpha-D-ribose 1-phosphate + hypoxanthine</text>
        <dbReference type="Rhea" id="RHEA:27646"/>
        <dbReference type="ChEBI" id="CHEBI:17368"/>
        <dbReference type="ChEBI" id="CHEBI:17596"/>
        <dbReference type="ChEBI" id="CHEBI:43474"/>
        <dbReference type="ChEBI" id="CHEBI:57720"/>
        <dbReference type="EC" id="2.4.2.1"/>
    </reaction>
    <physiologicalReaction direction="left-to-right" evidence="1">
        <dbReference type="Rhea" id="RHEA:27647"/>
    </physiologicalReaction>
</comment>
<comment type="catalytic activity">
    <reaction evidence="1">
        <text>adenosine + H2O + H(+) = inosine + NH4(+)</text>
        <dbReference type="Rhea" id="RHEA:24408"/>
        <dbReference type="ChEBI" id="CHEBI:15377"/>
        <dbReference type="ChEBI" id="CHEBI:15378"/>
        <dbReference type="ChEBI" id="CHEBI:16335"/>
        <dbReference type="ChEBI" id="CHEBI:17596"/>
        <dbReference type="ChEBI" id="CHEBI:28938"/>
        <dbReference type="EC" id="3.5.4.4"/>
    </reaction>
    <physiologicalReaction direction="left-to-right" evidence="1">
        <dbReference type="Rhea" id="RHEA:24409"/>
    </physiologicalReaction>
</comment>
<comment type="cofactor">
    <cofactor evidence="2">
        <name>Cu cation</name>
        <dbReference type="ChEBI" id="CHEBI:23378"/>
    </cofactor>
    <text evidence="2">Binds 4 Cu cations per subunit.</text>
</comment>
<comment type="biophysicochemical properties">
    <kinetics>
        <KM evidence="2">26 uM for 2,2'-azino-bis(3-ethylbenzthiazoline-6-sulfonic acid) (at pH 4.5 and 40 degrees Celsius)</KM>
        <KM evidence="2">0.43 uM for syringaldazine (at pH 4.5 and 40 degrees Celsius)</KM>
        <KM evidence="2">0.45 uM for 2,6-dimethoxyphenol (at pH 4.5 and 40 degrees Celsius)</KM>
        <text evidence="2">kcat is 18 sec(-1) with 2,2'-azino-bis(3-ethylbenzthiazoline-6-sulfonic acid) as substrate. kcat is 660 sec(-1) with syringaldazine as substrate. kcat is 1175 sec(-1) with 2,6-dimethoxyphenol as substrate (at pH 4.5 and 40 degrees Celsius).</text>
    </kinetics>
    <phDependence>
        <text evidence="2">Optimum pH is 4.0-5.0. Activity is very high over a broad pH range from 4.0 to 9.0. Exhibits more than 70% activity at pH 3.5 and 9.5.</text>
    </phDependence>
    <temperatureDependence>
        <text evidence="2">Optimum temperature is about 60 degrees Celsius. Is fully stable at this temperature.</text>
    </temperatureDependence>
</comment>
<comment type="subunit">
    <text evidence="2">Homodimer.</text>
</comment>
<comment type="similarity">
    <text evidence="4">Belongs to the purine nucleoside phosphorylase YfiH/LACC1 family.</text>
</comment>
<feature type="chain" id="PRO_0000440780" description="Adenosine deaminase RL5">
    <location>
        <begin position="1"/>
        <end position="262"/>
    </location>
</feature>
<feature type="binding site" evidence="5">
    <location>
        <position position="36"/>
    </location>
    <ligand>
        <name>Cu cation</name>
        <dbReference type="ChEBI" id="CHEBI:23378"/>
        <label>3</label>
    </ligand>
</feature>
<feature type="binding site" evidence="5">
    <location>
        <position position="40"/>
    </location>
    <ligand>
        <name>Cu cation</name>
        <dbReference type="ChEBI" id="CHEBI:23378"/>
        <label>3</label>
    </ligand>
</feature>
<feature type="binding site" evidence="5">
    <location>
        <position position="68"/>
    </location>
    <ligand>
        <name>Cu cation</name>
        <dbReference type="ChEBI" id="CHEBI:23378"/>
        <label>3</label>
    </ligand>
</feature>
<feature type="binding site" evidence="5">
    <location>
        <position position="73"/>
    </location>
    <ligand>
        <name>Cu cation</name>
        <dbReference type="ChEBI" id="CHEBI:23378"/>
        <label>1</label>
        <note>catalytic</note>
    </ligand>
</feature>
<feature type="binding site" evidence="5">
    <location>
        <position position="75"/>
    </location>
    <ligand>
        <name>Cu cation</name>
        <dbReference type="ChEBI" id="CHEBI:23378"/>
        <label>1</label>
        <note>catalytic</note>
    </ligand>
</feature>
<feature type="binding site" evidence="5">
    <location>
        <position position="114"/>
    </location>
    <ligand>
        <name>Cu cation</name>
        <dbReference type="ChEBI" id="CHEBI:23378"/>
        <label>3</label>
    </ligand>
</feature>
<feature type="binding site" evidence="5">
    <location>
        <position position="118"/>
    </location>
    <ligand>
        <name>Cu cation</name>
        <dbReference type="ChEBI" id="CHEBI:23378"/>
        <label>1</label>
        <note>catalytic</note>
    </ligand>
</feature>
<feature type="binding site" evidence="5">
    <location>
        <position position="135"/>
    </location>
    <ligand>
        <name>Cu cation</name>
        <dbReference type="ChEBI" id="CHEBI:23378"/>
        <label>1</label>
        <note>catalytic</note>
    </ligand>
</feature>
<feature type="binding site" evidence="5">
    <location>
        <position position="172"/>
    </location>
    <ligand>
        <name>Cu cation</name>
        <dbReference type="ChEBI" id="CHEBI:23378"/>
        <label>2</label>
    </ligand>
</feature>
<feature type="binding site" evidence="5">
    <location>
        <position position="175"/>
    </location>
    <ligand>
        <name>Cu cation</name>
        <dbReference type="ChEBI" id="CHEBI:23378"/>
        <label>2</label>
    </ligand>
</feature>
<feature type="binding site" evidence="5">
    <location>
        <position position="234"/>
    </location>
    <ligand>
        <name>Cu cation</name>
        <dbReference type="ChEBI" id="CHEBI:23378"/>
        <label>2</label>
    </ligand>
</feature>
<feature type="binding site" evidence="5">
    <location>
        <position position="237"/>
    </location>
    <ligand>
        <name>Cu cation</name>
        <dbReference type="ChEBI" id="CHEBI:23378"/>
        <label>2</label>
    </ligand>
</feature>
<feature type="mutagenesis site" description="Loss of 1.0 of Cu/mol of protein. Loss of catalytic activity." evidence="2">
    <original>N</original>
    <variation>A</variation>
    <location>
        <position position="36"/>
    </location>
</feature>
<feature type="mutagenesis site" description="Loss of 1.0 of Cu/mol of protein. Loss of catalytic activity." evidence="2">
    <original>Y</original>
    <variation>A</variation>
    <location>
        <position position="40"/>
    </location>
</feature>
<feature type="mutagenesis site" description="No effect on Cu content. No effect on catalytic activity." evidence="2">
    <original>M</original>
    <variation>A</variation>
    <location>
        <position position="68"/>
    </location>
</feature>
<feature type="mutagenesis site" description="Loss of 1.0 of Cu/mol of protein. No effect on secondary structure. Loss of catalytic activity." evidence="2">
    <original>H</original>
    <variation>A</variation>
    <location>
        <position position="73"/>
    </location>
</feature>
<feature type="mutagenesis site" description="Loss of 1.0 of Cu/mol of protein. No effect on secondary structure. Loss of catalytic activity." evidence="2">
    <original>C</original>
    <variation>Q</variation>
    <location>
        <position position="75"/>
    </location>
</feature>
<feature type="mutagenesis site" description="Loss of 1.0 of Cu/mol of protein. Loss of catalytic activity." evidence="2">
    <original>N</original>
    <variation>A</variation>
    <location>
        <position position="114"/>
    </location>
</feature>
<feature type="mutagenesis site" description="Loss of 1.0 of Cu/mol of protein. No effect on secondary structure. Loss of catalytic activity." evidence="2">
    <original>C</original>
    <variation>Q</variation>
    <location>
        <position position="118"/>
    </location>
</feature>
<feature type="mutagenesis site" description="Loss of 1.0 of Cu/mol of protein. No effect on secondary structure. Loss of catalytic activity." evidence="2">
    <original>H</original>
    <variation>A</variation>
    <location>
        <position position="135"/>
    </location>
</feature>
<feature type="mutagenesis site" description="Loss of 1.0 of Cu/mol of protein. Loss of catalytic activity." evidence="2">
    <original>C</original>
    <variation>Q</variation>
    <location>
        <position position="172"/>
    </location>
</feature>
<feature type="mutagenesis site" description="Loss of 1.0 of Cu/mol of protein. Loss of catalytic activity." evidence="2">
    <original>C</original>
    <variation>Q</variation>
    <location>
        <position position="175"/>
    </location>
</feature>
<feature type="mutagenesis site" description="Binds only 1.0 of Cu/mol of protein. Causes major change in secondary structure. Displays about 10% of wild-type catalytic activity." evidence="2">
    <original>H</original>
    <variation>A</variation>
    <location>
        <position position="190"/>
    </location>
</feature>
<feature type="mutagenesis site" description="Binds only 1.0 of Cu/mol of protein. Causes major change in secondary structure. Displays about 10% of wild-type catalytic activity." evidence="2">
    <original>H</original>
    <variation>A</variation>
    <location>
        <position position="207"/>
    </location>
</feature>
<feature type="mutagenesis site" description="Loss of 1.0 of Cu/mol of protein. No effect on secondary structure. Loss of catalytic activity." evidence="2">
    <original>H</original>
    <variation>A</variation>
    <location>
        <position position="233"/>
    </location>
</feature>
<feature type="mutagenesis site" description="No effect on Cu content. No effect on catalytic activity." evidence="2">
    <original>C</original>
    <variation>Q</variation>
    <location>
        <position position="234"/>
    </location>
</feature>
<feature type="mutagenesis site" description="Loss of 1.0 of Cu/mol of protein. Loss of catalytic activity." evidence="2">
    <original>C</original>
    <variation>Q</variation>
    <location>
        <position position="237"/>
    </location>
</feature>
<feature type="mutagenesis site" description="Binds only 1.0 of Cu/mol of protein. Causes major change in secondary structure. Loss of catalytic activity." evidence="2">
    <original>H</original>
    <variation>A</variation>
    <location>
        <position position="239"/>
    </location>
</feature>
<proteinExistence type="evidence at protein level"/>
<accession>Q1EIR0</accession>
<sequence length="262" mass="28282">MIELEKLDFAKSVEGVEAFSTTRGQVDGRNAYSGVNLCDYVGDDALRVLDARLTLAMQLGVDLDDLVMPRQTHSCRVAVIDERFRALDIDEQEAALEGVDALVTRLQGIVIGVNTADCVPIVLVDSQAGIVAVSHAGWRGTVGRIAKAVVEEMCRQGATVDRIQAAMGPSICQDCFEVGDEVVEAFKKAHFNLNDIVVRNPATGKAHIDLRAANRAVLVAAGVPAANIVESQHCSRCEHTSFFSARRLGINSGRTFTGIYRK</sequence>
<keyword id="KW-0186">Copper</keyword>
<keyword id="KW-0378">Hydrolase</keyword>
<keyword id="KW-0479">Metal-binding</keyword>
<keyword id="KW-0560">Oxidoreductase</keyword>
<keyword id="KW-0808">Transferase</keyword>
<keyword id="KW-0862">Zinc</keyword>
<name>PURNU_UNKP</name>